<name>RS15_ECOLU</name>
<organism>
    <name type="scientific">Escherichia coli O17:K52:H18 (strain UMN026 / ExPEC)</name>
    <dbReference type="NCBI Taxonomy" id="585056"/>
    <lineage>
        <taxon>Bacteria</taxon>
        <taxon>Pseudomonadati</taxon>
        <taxon>Pseudomonadota</taxon>
        <taxon>Gammaproteobacteria</taxon>
        <taxon>Enterobacterales</taxon>
        <taxon>Enterobacteriaceae</taxon>
        <taxon>Escherichia</taxon>
    </lineage>
</organism>
<sequence length="89" mass="10269">MSLSTEATAKIVSEFGRDANDTGSTEVQVALLTAQINHLQGHFAEHKKDHHSRRGLLRMVSQRRKLLDYLKRKDVARYTQLIERLGLRR</sequence>
<gene>
    <name evidence="1" type="primary">rpsO</name>
    <name type="ordered locus">ECUMN_3647</name>
</gene>
<comment type="function">
    <text evidence="1">One of the primary rRNA binding proteins, it binds directly to 16S rRNA where it helps nucleate assembly of the platform of the 30S subunit by binding and bridging several RNA helices of the 16S rRNA.</text>
</comment>
<comment type="function">
    <text evidence="1">Forms an intersubunit bridge (bridge B4) with the 23S rRNA of the 50S subunit in the ribosome.</text>
</comment>
<comment type="subunit">
    <text evidence="1">Part of the 30S ribosomal subunit. Forms a bridge to the 50S subunit in the 70S ribosome, contacting the 23S rRNA.</text>
</comment>
<comment type="similarity">
    <text evidence="1">Belongs to the universal ribosomal protein uS15 family.</text>
</comment>
<reference key="1">
    <citation type="journal article" date="2009" name="PLoS Genet.">
        <title>Organised genome dynamics in the Escherichia coli species results in highly diverse adaptive paths.</title>
        <authorList>
            <person name="Touchon M."/>
            <person name="Hoede C."/>
            <person name="Tenaillon O."/>
            <person name="Barbe V."/>
            <person name="Baeriswyl S."/>
            <person name="Bidet P."/>
            <person name="Bingen E."/>
            <person name="Bonacorsi S."/>
            <person name="Bouchier C."/>
            <person name="Bouvet O."/>
            <person name="Calteau A."/>
            <person name="Chiapello H."/>
            <person name="Clermont O."/>
            <person name="Cruveiller S."/>
            <person name="Danchin A."/>
            <person name="Diard M."/>
            <person name="Dossat C."/>
            <person name="Karoui M.E."/>
            <person name="Frapy E."/>
            <person name="Garry L."/>
            <person name="Ghigo J.M."/>
            <person name="Gilles A.M."/>
            <person name="Johnson J."/>
            <person name="Le Bouguenec C."/>
            <person name="Lescat M."/>
            <person name="Mangenot S."/>
            <person name="Martinez-Jehanne V."/>
            <person name="Matic I."/>
            <person name="Nassif X."/>
            <person name="Oztas S."/>
            <person name="Petit M.A."/>
            <person name="Pichon C."/>
            <person name="Rouy Z."/>
            <person name="Ruf C.S."/>
            <person name="Schneider D."/>
            <person name="Tourret J."/>
            <person name="Vacherie B."/>
            <person name="Vallenet D."/>
            <person name="Medigue C."/>
            <person name="Rocha E.P.C."/>
            <person name="Denamur E."/>
        </authorList>
    </citation>
    <scope>NUCLEOTIDE SEQUENCE [LARGE SCALE GENOMIC DNA]</scope>
    <source>
        <strain>UMN026 / ExPEC</strain>
    </source>
</reference>
<accession>B7NDF1</accession>
<evidence type="ECO:0000255" key="1">
    <source>
        <dbReference type="HAMAP-Rule" id="MF_01343"/>
    </source>
</evidence>
<evidence type="ECO:0000305" key="2"/>
<keyword id="KW-0687">Ribonucleoprotein</keyword>
<keyword id="KW-0689">Ribosomal protein</keyword>
<keyword id="KW-0694">RNA-binding</keyword>
<keyword id="KW-0699">rRNA-binding</keyword>
<protein>
    <recommendedName>
        <fullName evidence="1">Small ribosomal subunit protein uS15</fullName>
    </recommendedName>
    <alternativeName>
        <fullName evidence="2">30S ribosomal protein S15</fullName>
    </alternativeName>
</protein>
<proteinExistence type="inferred from homology"/>
<dbReference type="EMBL" id="CU928163">
    <property type="protein sequence ID" value="CAR14801.1"/>
    <property type="molecule type" value="Genomic_DNA"/>
</dbReference>
<dbReference type="RefSeq" id="WP_000059466.1">
    <property type="nucleotide sequence ID" value="NC_011751.1"/>
</dbReference>
<dbReference type="RefSeq" id="YP_002414306.1">
    <property type="nucleotide sequence ID" value="NC_011751.1"/>
</dbReference>
<dbReference type="SMR" id="B7NDF1"/>
<dbReference type="STRING" id="585056.ECUMN_3647"/>
<dbReference type="GeneID" id="93778818"/>
<dbReference type="KEGG" id="eum:ECUMN_3647"/>
<dbReference type="PATRIC" id="fig|585056.7.peg.3827"/>
<dbReference type="HOGENOM" id="CLU_148518_0_0_6"/>
<dbReference type="Proteomes" id="UP000007097">
    <property type="component" value="Chromosome"/>
</dbReference>
<dbReference type="GO" id="GO:0022627">
    <property type="term" value="C:cytosolic small ribosomal subunit"/>
    <property type="evidence" value="ECO:0007669"/>
    <property type="project" value="TreeGrafter"/>
</dbReference>
<dbReference type="GO" id="GO:0019843">
    <property type="term" value="F:rRNA binding"/>
    <property type="evidence" value="ECO:0007669"/>
    <property type="project" value="UniProtKB-UniRule"/>
</dbReference>
<dbReference type="GO" id="GO:0003735">
    <property type="term" value="F:structural constituent of ribosome"/>
    <property type="evidence" value="ECO:0007669"/>
    <property type="project" value="InterPro"/>
</dbReference>
<dbReference type="GO" id="GO:0006412">
    <property type="term" value="P:translation"/>
    <property type="evidence" value="ECO:0007669"/>
    <property type="project" value="UniProtKB-UniRule"/>
</dbReference>
<dbReference type="CDD" id="cd00353">
    <property type="entry name" value="Ribosomal_S15p_S13e"/>
    <property type="match status" value="1"/>
</dbReference>
<dbReference type="FunFam" id="1.10.287.10:FF:000002">
    <property type="entry name" value="30S ribosomal protein S15"/>
    <property type="match status" value="1"/>
</dbReference>
<dbReference type="Gene3D" id="6.10.250.3130">
    <property type="match status" value="1"/>
</dbReference>
<dbReference type="Gene3D" id="1.10.287.10">
    <property type="entry name" value="S15/NS1, RNA-binding"/>
    <property type="match status" value="1"/>
</dbReference>
<dbReference type="HAMAP" id="MF_01343_B">
    <property type="entry name" value="Ribosomal_uS15_B"/>
    <property type="match status" value="1"/>
</dbReference>
<dbReference type="InterPro" id="IPR000589">
    <property type="entry name" value="Ribosomal_uS15"/>
</dbReference>
<dbReference type="InterPro" id="IPR005290">
    <property type="entry name" value="Ribosomal_uS15_bac-type"/>
</dbReference>
<dbReference type="InterPro" id="IPR009068">
    <property type="entry name" value="uS15_NS1_RNA-bd_sf"/>
</dbReference>
<dbReference type="NCBIfam" id="TIGR00952">
    <property type="entry name" value="S15_bact"/>
    <property type="match status" value="1"/>
</dbReference>
<dbReference type="PANTHER" id="PTHR23321">
    <property type="entry name" value="RIBOSOMAL PROTEIN S15, BACTERIAL AND ORGANELLAR"/>
    <property type="match status" value="1"/>
</dbReference>
<dbReference type="PANTHER" id="PTHR23321:SF26">
    <property type="entry name" value="SMALL RIBOSOMAL SUBUNIT PROTEIN US15M"/>
    <property type="match status" value="1"/>
</dbReference>
<dbReference type="Pfam" id="PF00312">
    <property type="entry name" value="Ribosomal_S15"/>
    <property type="match status" value="1"/>
</dbReference>
<dbReference type="SMART" id="SM01387">
    <property type="entry name" value="Ribosomal_S15"/>
    <property type="match status" value="1"/>
</dbReference>
<dbReference type="SUPFAM" id="SSF47060">
    <property type="entry name" value="S15/NS1 RNA-binding domain"/>
    <property type="match status" value="1"/>
</dbReference>
<dbReference type="PROSITE" id="PS00362">
    <property type="entry name" value="RIBOSOMAL_S15"/>
    <property type="match status" value="1"/>
</dbReference>
<feature type="chain" id="PRO_1000143113" description="Small ribosomal subunit protein uS15">
    <location>
        <begin position="1"/>
        <end position="89"/>
    </location>
</feature>